<comment type="subcellular location">
    <subcellularLocation>
        <location evidence="1">Bacterial flagellum basal body</location>
    </subcellularLocation>
</comment>
<comment type="similarity">
    <text evidence="1">Belongs to the FliE family.</text>
</comment>
<feature type="chain" id="PRO_1000045875" description="Flagellar hook-basal body complex protein FliE">
    <location>
        <begin position="1"/>
        <end position="104"/>
    </location>
</feature>
<protein>
    <recommendedName>
        <fullName evidence="1">Flagellar hook-basal body complex protein FliE</fullName>
    </recommendedName>
</protein>
<evidence type="ECO:0000255" key="1">
    <source>
        <dbReference type="HAMAP-Rule" id="MF_00724"/>
    </source>
</evidence>
<reference key="1">
    <citation type="journal article" date="2004" name="Nat. Genet.">
        <title>Comparison of genome degradation in Paratyphi A and Typhi, human-restricted serovars of Salmonella enterica that cause typhoid.</title>
        <authorList>
            <person name="McClelland M."/>
            <person name="Sanderson K.E."/>
            <person name="Clifton S.W."/>
            <person name="Latreille P."/>
            <person name="Porwollik S."/>
            <person name="Sabo A."/>
            <person name="Meyer R."/>
            <person name="Bieri T."/>
            <person name="Ozersky P."/>
            <person name="McLellan M."/>
            <person name="Harkins C.R."/>
            <person name="Wang C."/>
            <person name="Nguyen C."/>
            <person name="Berghoff A."/>
            <person name="Elliott G."/>
            <person name="Kohlberg S."/>
            <person name="Strong C."/>
            <person name="Du F."/>
            <person name="Carter J."/>
            <person name="Kremizki C."/>
            <person name="Layman D."/>
            <person name="Leonard S."/>
            <person name="Sun H."/>
            <person name="Fulton L."/>
            <person name="Nash W."/>
            <person name="Miner T."/>
            <person name="Minx P."/>
            <person name="Delehaunty K."/>
            <person name="Fronick C."/>
            <person name="Magrini V."/>
            <person name="Nhan M."/>
            <person name="Warren W."/>
            <person name="Florea L."/>
            <person name="Spieth J."/>
            <person name="Wilson R.K."/>
        </authorList>
    </citation>
    <scope>NUCLEOTIDE SEQUENCE [LARGE SCALE GENOMIC DNA]</scope>
    <source>
        <strain>ATCC 9150 / SARB42</strain>
    </source>
</reference>
<dbReference type="EMBL" id="CP000026">
    <property type="protein sequence ID" value="AAV76882.1"/>
    <property type="molecule type" value="Genomic_DNA"/>
</dbReference>
<dbReference type="RefSeq" id="WP_000719037.1">
    <property type="nucleotide sequence ID" value="NC_006511.1"/>
</dbReference>
<dbReference type="SMR" id="Q5PHZ3"/>
<dbReference type="KEGG" id="spt:SPA0902"/>
<dbReference type="HOGENOM" id="CLU_147249_0_2_6"/>
<dbReference type="Proteomes" id="UP000008185">
    <property type="component" value="Chromosome"/>
</dbReference>
<dbReference type="GO" id="GO:0009425">
    <property type="term" value="C:bacterial-type flagellum basal body"/>
    <property type="evidence" value="ECO:0007669"/>
    <property type="project" value="UniProtKB-SubCell"/>
</dbReference>
<dbReference type="GO" id="GO:0003774">
    <property type="term" value="F:cytoskeletal motor activity"/>
    <property type="evidence" value="ECO:0007669"/>
    <property type="project" value="InterPro"/>
</dbReference>
<dbReference type="GO" id="GO:0005198">
    <property type="term" value="F:structural molecule activity"/>
    <property type="evidence" value="ECO:0007669"/>
    <property type="project" value="InterPro"/>
</dbReference>
<dbReference type="GO" id="GO:0071973">
    <property type="term" value="P:bacterial-type flagellum-dependent cell motility"/>
    <property type="evidence" value="ECO:0007669"/>
    <property type="project" value="InterPro"/>
</dbReference>
<dbReference type="HAMAP" id="MF_00724">
    <property type="entry name" value="FliE"/>
    <property type="match status" value="1"/>
</dbReference>
<dbReference type="InterPro" id="IPR001624">
    <property type="entry name" value="FliE"/>
</dbReference>
<dbReference type="NCBIfam" id="TIGR00205">
    <property type="entry name" value="fliE"/>
    <property type="match status" value="1"/>
</dbReference>
<dbReference type="PANTHER" id="PTHR34653">
    <property type="match status" value="1"/>
</dbReference>
<dbReference type="PANTHER" id="PTHR34653:SF1">
    <property type="entry name" value="FLAGELLAR HOOK-BASAL BODY COMPLEX PROTEIN FLIE"/>
    <property type="match status" value="1"/>
</dbReference>
<dbReference type="Pfam" id="PF02049">
    <property type="entry name" value="FliE"/>
    <property type="match status" value="1"/>
</dbReference>
<dbReference type="PRINTS" id="PR01006">
    <property type="entry name" value="FLGHOOKFLIE"/>
</dbReference>
<keyword id="KW-0975">Bacterial flagellum</keyword>
<organism>
    <name type="scientific">Salmonella paratyphi A (strain ATCC 9150 / SARB42)</name>
    <dbReference type="NCBI Taxonomy" id="295319"/>
    <lineage>
        <taxon>Bacteria</taxon>
        <taxon>Pseudomonadati</taxon>
        <taxon>Pseudomonadota</taxon>
        <taxon>Gammaproteobacteria</taxon>
        <taxon>Enterobacterales</taxon>
        <taxon>Enterobacteriaceae</taxon>
        <taxon>Salmonella</taxon>
    </lineage>
</organism>
<accession>Q5PHZ3</accession>
<sequence>MAAIQGIEGVISQLQATAMAARGQDTHSQSTVSFAGQLHAALDRISDRQTAARVQAEKFTLGEPGIALNDVMADMQKASVSMQMGIQVRNKLVAAYQEVMSMQV</sequence>
<proteinExistence type="inferred from homology"/>
<gene>
    <name evidence="1" type="primary">fliE</name>
    <name type="ordered locus">SPA0902</name>
</gene>
<name>FLIE_SALPA</name>